<proteinExistence type="evidence at protein level"/>
<gene>
    <name type="primary">ZNF490</name>
    <name type="synonym">KIAA1198</name>
</gene>
<accession>Q9ULM2</accession>
<keyword id="KW-0238">DNA-binding</keyword>
<keyword id="KW-0479">Metal-binding</keyword>
<keyword id="KW-0539">Nucleus</keyword>
<keyword id="KW-1267">Proteomics identification</keyword>
<keyword id="KW-1185">Reference proteome</keyword>
<keyword id="KW-0677">Repeat</keyword>
<keyword id="KW-0804">Transcription</keyword>
<keyword id="KW-0805">Transcription regulation</keyword>
<keyword id="KW-0862">Zinc</keyword>
<keyword id="KW-0863">Zinc-finger</keyword>
<organism>
    <name type="scientific">Homo sapiens</name>
    <name type="common">Human</name>
    <dbReference type="NCBI Taxonomy" id="9606"/>
    <lineage>
        <taxon>Eukaryota</taxon>
        <taxon>Metazoa</taxon>
        <taxon>Chordata</taxon>
        <taxon>Craniata</taxon>
        <taxon>Vertebrata</taxon>
        <taxon>Euteleostomi</taxon>
        <taxon>Mammalia</taxon>
        <taxon>Eutheria</taxon>
        <taxon>Euarchontoglires</taxon>
        <taxon>Primates</taxon>
        <taxon>Haplorrhini</taxon>
        <taxon>Catarrhini</taxon>
        <taxon>Hominidae</taxon>
        <taxon>Homo</taxon>
    </lineage>
</organism>
<feature type="chain" id="PRO_0000047613" description="Zinc finger protein 490">
    <location>
        <begin position="1"/>
        <end position="529"/>
    </location>
</feature>
<feature type="domain" description="KRAB" evidence="2">
    <location>
        <begin position="57"/>
        <end position="132"/>
    </location>
</feature>
<feature type="zinc finger region" description="C2H2-type 1" evidence="1">
    <location>
        <begin position="156"/>
        <end position="178"/>
    </location>
</feature>
<feature type="zinc finger region" description="C2H2-type 2" evidence="1">
    <location>
        <begin position="194"/>
        <end position="216"/>
    </location>
</feature>
<feature type="zinc finger region" description="C2H2-type 3" evidence="1">
    <location>
        <begin position="222"/>
        <end position="244"/>
    </location>
</feature>
<feature type="zinc finger region" description="C2H2-type 4" evidence="1">
    <location>
        <begin position="250"/>
        <end position="272"/>
    </location>
</feature>
<feature type="zinc finger region" description="C2H2-type 5" evidence="1">
    <location>
        <begin position="278"/>
        <end position="300"/>
    </location>
</feature>
<feature type="zinc finger region" description="C2H2-type 6" evidence="1">
    <location>
        <begin position="306"/>
        <end position="328"/>
    </location>
</feature>
<feature type="zinc finger region" description="C2H2-type 7" evidence="1">
    <location>
        <begin position="334"/>
        <end position="356"/>
    </location>
</feature>
<feature type="zinc finger region" description="C2H2-type 8" evidence="1">
    <location>
        <begin position="362"/>
        <end position="384"/>
    </location>
</feature>
<feature type="zinc finger region" description="C2H2-type 9" evidence="1">
    <location>
        <begin position="390"/>
        <end position="412"/>
    </location>
</feature>
<feature type="zinc finger region" description="C2H2-type 10" evidence="1">
    <location>
        <begin position="418"/>
        <end position="440"/>
    </location>
</feature>
<feature type="zinc finger region" description="C2H2-type 11" evidence="1">
    <location>
        <begin position="446"/>
        <end position="468"/>
    </location>
</feature>
<feature type="zinc finger region" description="C2H2-type 12" evidence="1">
    <location>
        <begin position="474"/>
        <end position="496"/>
    </location>
</feature>
<feature type="zinc finger region" description="C2H2-type 13" evidence="1">
    <location>
        <begin position="502"/>
        <end position="524"/>
    </location>
</feature>
<feature type="region of interest" description="Disordered" evidence="3">
    <location>
        <begin position="1"/>
        <end position="53"/>
    </location>
</feature>
<evidence type="ECO:0000255" key="1">
    <source>
        <dbReference type="PROSITE-ProRule" id="PRU00042"/>
    </source>
</evidence>
<evidence type="ECO:0000255" key="2">
    <source>
        <dbReference type="PROSITE-ProRule" id="PRU00119"/>
    </source>
</evidence>
<evidence type="ECO:0000256" key="3">
    <source>
        <dbReference type="SAM" id="MobiDB-lite"/>
    </source>
</evidence>
<evidence type="ECO:0000305" key="4"/>
<protein>
    <recommendedName>
        <fullName>Zinc finger protein 490</fullName>
    </recommendedName>
</protein>
<name>ZN490_HUMAN</name>
<comment type="function">
    <text>May be involved in transcriptional regulation.</text>
</comment>
<comment type="interaction">
    <interactant intactId="EBI-1105370">
        <id>Q9ULM2</id>
    </interactant>
    <interactant intactId="EBI-10171416">
        <id>Q96JN2-2</id>
        <label>CCDC136</label>
    </interactant>
    <organismsDiffer>false</organismsDiffer>
    <experiments>3</experiments>
</comment>
<comment type="interaction">
    <interactant intactId="EBI-1105370">
        <id>Q9ULM2</id>
    </interactant>
    <interactant intactId="EBI-748961">
        <id>O95273</id>
        <label>CCNDBP1</label>
    </interactant>
    <organismsDiffer>false</organismsDiffer>
    <experiments>3</experiments>
</comment>
<comment type="interaction">
    <interactant intactId="EBI-1105370">
        <id>Q9ULM2</id>
    </interactant>
    <interactant intactId="EBI-739624">
        <id>Q8NHQ1</id>
        <label>CEP70</label>
    </interactant>
    <organismsDiffer>false</organismsDiffer>
    <experiments>7</experiments>
</comment>
<comment type="interaction">
    <interactant intactId="EBI-1105370">
        <id>Q9ULM2</id>
    </interactant>
    <interactant intactId="EBI-5661036">
        <id>A1L4K1</id>
        <label>FSD2</label>
    </interactant>
    <organismsDiffer>false</organismsDiffer>
    <experiments>3</experiments>
</comment>
<comment type="interaction">
    <interactant intactId="EBI-1105370">
        <id>Q9ULM2</id>
    </interactant>
    <interactant intactId="EBI-374781">
        <id>O76003</id>
        <label>GLRX3</label>
    </interactant>
    <organismsDiffer>false</organismsDiffer>
    <experiments>3</experiments>
</comment>
<comment type="interaction">
    <interactant intactId="EBI-1105370">
        <id>Q9ULM2</id>
    </interactant>
    <interactant intactId="EBI-5916454">
        <id>A6NEM1</id>
        <label>GOLGA6L9</label>
    </interactant>
    <organismsDiffer>false</organismsDiffer>
    <experiments>3</experiments>
</comment>
<comment type="interaction">
    <interactant intactId="EBI-1105370">
        <id>Q9ULM2</id>
    </interactant>
    <interactant intactId="EBI-712814">
        <id>P54257</id>
        <label>HAP1</label>
    </interactant>
    <organismsDiffer>false</organismsDiffer>
    <experiments>3</experiments>
</comment>
<comment type="interaction">
    <interactant intactId="EBI-1105370">
        <id>Q9ULM2</id>
    </interactant>
    <interactant intactId="EBI-12012928">
        <id>P60371</id>
        <label>KRTAP10-6</label>
    </interactant>
    <organismsDiffer>false</organismsDiffer>
    <experiments>3</experiments>
</comment>
<comment type="interaction">
    <interactant intactId="EBI-1105370">
        <id>Q9ULM2</id>
    </interactant>
    <interactant intactId="EBI-10172290">
        <id>P60409</id>
        <label>KRTAP10-7</label>
    </interactant>
    <organismsDiffer>false</organismsDiffer>
    <experiments>6</experiments>
</comment>
<comment type="interaction">
    <interactant intactId="EBI-1105370">
        <id>Q9ULM2</id>
    </interactant>
    <interactant intactId="EBI-10171774">
        <id>P60410</id>
        <label>KRTAP10-8</label>
    </interactant>
    <organismsDiffer>false</organismsDiffer>
    <experiments>3</experiments>
</comment>
<comment type="interaction">
    <interactant intactId="EBI-1105370">
        <id>Q9ULM2</id>
    </interactant>
    <interactant intactId="EBI-11953334">
        <id>P60328</id>
        <label>KRTAP12-3</label>
    </interactant>
    <organismsDiffer>false</organismsDiffer>
    <experiments>3</experiments>
</comment>
<comment type="interaction">
    <interactant intactId="EBI-1105370">
        <id>Q9ULM2</id>
    </interactant>
    <interactant intactId="EBI-741037">
        <id>Q9BRK4</id>
        <label>LZTS2</label>
    </interactant>
    <organismsDiffer>false</organismsDiffer>
    <experiments>3</experiments>
</comment>
<comment type="interaction">
    <interactant intactId="EBI-1105370">
        <id>Q9ULM2</id>
    </interactant>
    <interactant intactId="EBI-724076">
        <id>Q99750</id>
        <label>MDFI</label>
    </interactant>
    <organismsDiffer>false</organismsDiffer>
    <experiments>7</experiments>
</comment>
<comment type="interaction">
    <interactant intactId="EBI-1105370">
        <id>Q9ULM2</id>
    </interactant>
    <interactant intactId="EBI-16439278">
        <id>Q6FHY5</id>
        <label>MEOX2</label>
    </interactant>
    <organismsDiffer>false</organismsDiffer>
    <experiments>3</experiments>
</comment>
<comment type="interaction">
    <interactant intactId="EBI-1105370">
        <id>Q9ULM2</id>
    </interactant>
    <interactant intactId="EBI-742948">
        <id>Q5JR59</id>
        <label>MTUS2</label>
    </interactant>
    <organismsDiffer>false</organismsDiffer>
    <experiments>5</experiments>
</comment>
<comment type="interaction">
    <interactant intactId="EBI-1105370">
        <id>Q9ULM2</id>
    </interactant>
    <interactant intactId="EBI-11522433">
        <id>Q5JR59-3</id>
        <label>MTUS2</label>
    </interactant>
    <organismsDiffer>false</organismsDiffer>
    <experiments>3</experiments>
</comment>
<comment type="interaction">
    <interactant intactId="EBI-1105370">
        <id>Q9ULM2</id>
    </interactant>
    <interactant intactId="EBI-928842">
        <id>Q9GZM8</id>
        <label>NDEL1</label>
    </interactant>
    <organismsDiffer>false</organismsDiffer>
    <experiments>6</experiments>
</comment>
<comment type="interaction">
    <interactant intactId="EBI-1105370">
        <id>Q9ULM2</id>
    </interactant>
    <interactant intactId="EBI-712466">
        <id>Q16623</id>
        <label>STX1A</label>
    </interactant>
    <organismsDiffer>false</organismsDiffer>
    <experiments>3</experiments>
</comment>
<comment type="interaction">
    <interactant intactId="EBI-1105370">
        <id>Q9ULM2</id>
    </interactant>
    <interactant intactId="EBI-13323487">
        <id>Q8NA77</id>
        <label>TEX19</label>
    </interactant>
    <organismsDiffer>false</organismsDiffer>
    <experiments>3</experiments>
</comment>
<comment type="interaction">
    <interactant intactId="EBI-1105370">
        <id>Q9ULM2</id>
    </interactant>
    <interactant intactId="EBI-359224">
        <id>Q13077</id>
        <label>TRAF1</label>
    </interactant>
    <organismsDiffer>false</organismsDiffer>
    <experiments>3</experiments>
</comment>
<comment type="interaction">
    <interactant intactId="EBI-1105370">
        <id>Q9ULM2</id>
    </interactant>
    <interactant intactId="EBI-725997">
        <id>Q8WV44</id>
        <label>TRIM41</label>
    </interactant>
    <organismsDiffer>false</organismsDiffer>
    <experiments>7</experiments>
</comment>
<comment type="interaction">
    <interactant intactId="EBI-1105370">
        <id>Q9ULM2</id>
    </interactant>
    <interactant intactId="EBI-744794">
        <id>Q9BZW7</id>
        <label>TSGA10</label>
    </interactant>
    <organismsDiffer>false</organismsDiffer>
    <experiments>3</experiments>
</comment>
<comment type="interaction">
    <interactant intactId="EBI-1105370">
        <id>Q9ULM2</id>
    </interactant>
    <interactant intactId="EBI-11957238">
        <id>Q2TAL6</id>
        <label>VWC2</label>
    </interactant>
    <organismsDiffer>false</organismsDiffer>
    <experiments>3</experiments>
</comment>
<comment type="interaction">
    <interactant intactId="EBI-1105370">
        <id>Q9ULM2</id>
    </interactant>
    <interactant intactId="EBI-747993">
        <id>Q9NQZ6</id>
        <label>ZC4H2</label>
    </interactant>
    <organismsDiffer>false</organismsDiffer>
    <experiments>7</experiments>
</comment>
<comment type="interaction">
    <interactant intactId="EBI-1105370">
        <id>Q9ULM2</id>
    </interactant>
    <interactant intactId="EBI-527853">
        <id>Q9UGI0</id>
        <label>ZRANB1</label>
    </interactant>
    <organismsDiffer>false</organismsDiffer>
    <experiments>3</experiments>
</comment>
<comment type="subcellular location">
    <subcellularLocation>
        <location evidence="4">Nucleus</location>
    </subcellularLocation>
</comment>
<comment type="similarity">
    <text evidence="4">Belongs to the krueppel C2H2-type zinc-finger protein family.</text>
</comment>
<comment type="sequence caution" evidence="4">
    <conflict type="erroneous initiation">
        <sequence resource="EMBL-CDS" id="BAA86512"/>
    </conflict>
</comment>
<reference key="1">
    <citation type="journal article" date="1999" name="DNA Res.">
        <title>Prediction of the coding sequences of unidentified human genes. XV. The complete sequences of 100 new cDNA clones from brain which code for large proteins in vitro.</title>
        <authorList>
            <person name="Nagase T."/>
            <person name="Ishikawa K."/>
            <person name="Kikuno R."/>
            <person name="Hirosawa M."/>
            <person name="Nomura N."/>
            <person name="Ohara O."/>
        </authorList>
    </citation>
    <scope>NUCLEOTIDE SEQUENCE [LARGE SCALE MRNA]</scope>
    <source>
        <tissue>Brain</tissue>
    </source>
</reference>
<reference key="2">
    <citation type="journal article" date="2004" name="Genome Res.">
        <title>The status, quality, and expansion of the NIH full-length cDNA project: the Mammalian Gene Collection (MGC).</title>
        <authorList>
            <consortium name="The MGC Project Team"/>
        </authorList>
    </citation>
    <scope>NUCLEOTIDE SEQUENCE [LARGE SCALE MRNA]</scope>
    <source>
        <tissue>Testis</tissue>
    </source>
</reference>
<dbReference type="EMBL" id="AB033024">
    <property type="protein sequence ID" value="BAA86512.1"/>
    <property type="status" value="ALT_INIT"/>
    <property type="molecule type" value="mRNA"/>
</dbReference>
<dbReference type="EMBL" id="BC038586">
    <property type="protein sequence ID" value="AAH38586.1"/>
    <property type="molecule type" value="mRNA"/>
</dbReference>
<dbReference type="CCDS" id="CCDS12272.1"/>
<dbReference type="RefSeq" id="NP_065765.1">
    <property type="nucleotide sequence ID" value="NM_020714.3"/>
</dbReference>
<dbReference type="SMR" id="Q9ULM2"/>
<dbReference type="BioGRID" id="121544">
    <property type="interactions" value="49"/>
</dbReference>
<dbReference type="FunCoup" id="Q9ULM2">
    <property type="interactions" value="125"/>
</dbReference>
<dbReference type="IntAct" id="Q9ULM2">
    <property type="interactions" value="45"/>
</dbReference>
<dbReference type="MINT" id="Q9ULM2"/>
<dbReference type="STRING" id="9606.ENSP00000311521"/>
<dbReference type="iPTMnet" id="Q9ULM2"/>
<dbReference type="PhosphoSitePlus" id="Q9ULM2"/>
<dbReference type="BioMuta" id="ZNF490"/>
<dbReference type="DMDM" id="20140911"/>
<dbReference type="jPOST" id="Q9ULM2"/>
<dbReference type="MassIVE" id="Q9ULM2"/>
<dbReference type="PaxDb" id="9606-ENSP00000311521"/>
<dbReference type="PeptideAtlas" id="Q9ULM2"/>
<dbReference type="ProteomicsDB" id="85077"/>
<dbReference type="Pumba" id="Q9ULM2"/>
<dbReference type="Antibodypedia" id="26054">
    <property type="antibodies" value="82 antibodies from 16 providers"/>
</dbReference>
<dbReference type="DNASU" id="57474"/>
<dbReference type="Ensembl" id="ENST00000311437.11">
    <property type="protein sequence ID" value="ENSP00000311521.6"/>
    <property type="gene ID" value="ENSG00000188033.10"/>
</dbReference>
<dbReference type="GeneID" id="57474"/>
<dbReference type="KEGG" id="hsa:57474"/>
<dbReference type="MANE-Select" id="ENST00000311437.11">
    <property type="protein sequence ID" value="ENSP00000311521.6"/>
    <property type="RefSeq nucleotide sequence ID" value="NM_020714.3"/>
    <property type="RefSeq protein sequence ID" value="NP_065765.1"/>
</dbReference>
<dbReference type="UCSC" id="uc002mtz.3">
    <property type="organism name" value="human"/>
</dbReference>
<dbReference type="AGR" id="HGNC:23705"/>
<dbReference type="CTD" id="57474"/>
<dbReference type="DisGeNET" id="57474"/>
<dbReference type="GeneCards" id="ZNF490"/>
<dbReference type="HGNC" id="HGNC:23705">
    <property type="gene designation" value="ZNF490"/>
</dbReference>
<dbReference type="HPA" id="ENSG00000188033">
    <property type="expression patterns" value="Low tissue specificity"/>
</dbReference>
<dbReference type="MIM" id="620118">
    <property type="type" value="gene"/>
</dbReference>
<dbReference type="neXtProt" id="NX_Q9ULM2"/>
<dbReference type="OpenTargets" id="ENSG00000188033"/>
<dbReference type="PharmGKB" id="PA134990049"/>
<dbReference type="VEuPathDB" id="HostDB:ENSG00000188033"/>
<dbReference type="eggNOG" id="KOG1721">
    <property type="taxonomic scope" value="Eukaryota"/>
</dbReference>
<dbReference type="GeneTree" id="ENSGT00940000164491"/>
<dbReference type="HOGENOM" id="CLU_002678_57_1_1"/>
<dbReference type="InParanoid" id="Q9ULM2"/>
<dbReference type="OMA" id="PNEYHEF"/>
<dbReference type="OrthoDB" id="9827751at2759"/>
<dbReference type="PAN-GO" id="Q9ULM2">
    <property type="GO annotations" value="4 GO annotations based on evolutionary models"/>
</dbReference>
<dbReference type="PhylomeDB" id="Q9ULM2"/>
<dbReference type="TreeFam" id="TF338854"/>
<dbReference type="PathwayCommons" id="Q9ULM2"/>
<dbReference type="Reactome" id="R-HSA-212436">
    <property type="pathway name" value="Generic Transcription Pathway"/>
</dbReference>
<dbReference type="SignaLink" id="Q9ULM2"/>
<dbReference type="BioGRID-ORCS" id="57474">
    <property type="hits" value="13 hits in 1173 CRISPR screens"/>
</dbReference>
<dbReference type="GenomeRNAi" id="57474"/>
<dbReference type="Pharos" id="Q9ULM2">
    <property type="development level" value="Tdark"/>
</dbReference>
<dbReference type="PRO" id="PR:Q9ULM2"/>
<dbReference type="Proteomes" id="UP000005640">
    <property type="component" value="Chromosome 19"/>
</dbReference>
<dbReference type="RNAct" id="Q9ULM2">
    <property type="molecule type" value="protein"/>
</dbReference>
<dbReference type="Bgee" id="ENSG00000188033">
    <property type="expression patterns" value="Expressed in buccal mucosa cell and 111 other cell types or tissues"/>
</dbReference>
<dbReference type="ExpressionAtlas" id="Q9ULM2">
    <property type="expression patterns" value="baseline and differential"/>
</dbReference>
<dbReference type="GO" id="GO:0005634">
    <property type="term" value="C:nucleus"/>
    <property type="evidence" value="ECO:0000318"/>
    <property type="project" value="GO_Central"/>
</dbReference>
<dbReference type="GO" id="GO:0000981">
    <property type="term" value="F:DNA-binding transcription factor activity, RNA polymerase II-specific"/>
    <property type="evidence" value="ECO:0000318"/>
    <property type="project" value="GO_Central"/>
</dbReference>
<dbReference type="GO" id="GO:0000978">
    <property type="term" value="F:RNA polymerase II cis-regulatory region sequence-specific DNA binding"/>
    <property type="evidence" value="ECO:0000318"/>
    <property type="project" value="GO_Central"/>
</dbReference>
<dbReference type="GO" id="GO:0008270">
    <property type="term" value="F:zinc ion binding"/>
    <property type="evidence" value="ECO:0007669"/>
    <property type="project" value="UniProtKB-KW"/>
</dbReference>
<dbReference type="GO" id="GO:0006357">
    <property type="term" value="P:regulation of transcription by RNA polymerase II"/>
    <property type="evidence" value="ECO:0000318"/>
    <property type="project" value="GO_Central"/>
</dbReference>
<dbReference type="CDD" id="cd07765">
    <property type="entry name" value="KRAB_A-box"/>
    <property type="match status" value="1"/>
</dbReference>
<dbReference type="FunFam" id="3.30.160.60:FF:002568">
    <property type="match status" value="1"/>
</dbReference>
<dbReference type="FunFam" id="3.30.160.60:FF:000100">
    <property type="entry name" value="Zinc finger 45-like"/>
    <property type="match status" value="1"/>
</dbReference>
<dbReference type="FunFam" id="3.30.160.60:FF:000240">
    <property type="entry name" value="Zinc finger protein 250"/>
    <property type="match status" value="1"/>
</dbReference>
<dbReference type="FunFam" id="3.30.160.60:FF:001009">
    <property type="entry name" value="Zinc finger protein 26"/>
    <property type="match status" value="1"/>
</dbReference>
<dbReference type="FunFam" id="3.30.160.60:FF:000352">
    <property type="entry name" value="zinc finger protein 3 homolog"/>
    <property type="match status" value="1"/>
</dbReference>
<dbReference type="FunFam" id="3.30.160.60:FF:000641">
    <property type="entry name" value="zinc finger protein 317 isoform X2"/>
    <property type="match status" value="1"/>
</dbReference>
<dbReference type="FunFam" id="3.30.160.60:FF:000184">
    <property type="entry name" value="Zinc finger protein 333"/>
    <property type="match status" value="3"/>
</dbReference>
<dbReference type="FunFam" id="3.30.160.60:FF:000044">
    <property type="entry name" value="zinc finger protein 37 homolog"/>
    <property type="match status" value="1"/>
</dbReference>
<dbReference type="FunFam" id="3.30.160.60:FF:001602">
    <property type="entry name" value="Zinc finger protein 490"/>
    <property type="match status" value="1"/>
</dbReference>
<dbReference type="FunFam" id="3.30.160.60:FF:000156">
    <property type="entry name" value="Zinc finger protein 568"/>
    <property type="match status" value="2"/>
</dbReference>
<dbReference type="Gene3D" id="6.10.140.140">
    <property type="match status" value="1"/>
</dbReference>
<dbReference type="Gene3D" id="3.30.160.60">
    <property type="entry name" value="Classic Zinc Finger"/>
    <property type="match status" value="13"/>
</dbReference>
<dbReference type="InterPro" id="IPR050752">
    <property type="entry name" value="C2H2-ZF_domain"/>
</dbReference>
<dbReference type="InterPro" id="IPR001909">
    <property type="entry name" value="KRAB"/>
</dbReference>
<dbReference type="InterPro" id="IPR036051">
    <property type="entry name" value="KRAB_dom_sf"/>
</dbReference>
<dbReference type="InterPro" id="IPR036236">
    <property type="entry name" value="Znf_C2H2_sf"/>
</dbReference>
<dbReference type="InterPro" id="IPR013087">
    <property type="entry name" value="Znf_C2H2_type"/>
</dbReference>
<dbReference type="PANTHER" id="PTHR24384:SF189">
    <property type="entry name" value="C2H2-TYPE DOMAIN-CONTAINING PROTEIN-RELATED"/>
    <property type="match status" value="1"/>
</dbReference>
<dbReference type="PANTHER" id="PTHR24384">
    <property type="entry name" value="FINGER PUTATIVE TRANSCRIPTION FACTOR FAMILY-RELATED"/>
    <property type="match status" value="1"/>
</dbReference>
<dbReference type="Pfam" id="PF01352">
    <property type="entry name" value="KRAB"/>
    <property type="match status" value="1"/>
</dbReference>
<dbReference type="Pfam" id="PF00096">
    <property type="entry name" value="zf-C2H2"/>
    <property type="match status" value="10"/>
</dbReference>
<dbReference type="Pfam" id="PF13465">
    <property type="entry name" value="zf-H2C2_2"/>
    <property type="match status" value="1"/>
</dbReference>
<dbReference type="SMART" id="SM00349">
    <property type="entry name" value="KRAB"/>
    <property type="match status" value="1"/>
</dbReference>
<dbReference type="SMART" id="SM00355">
    <property type="entry name" value="ZnF_C2H2"/>
    <property type="match status" value="13"/>
</dbReference>
<dbReference type="SUPFAM" id="SSF57667">
    <property type="entry name" value="beta-beta-alpha zinc fingers"/>
    <property type="match status" value="8"/>
</dbReference>
<dbReference type="SUPFAM" id="SSF109640">
    <property type="entry name" value="KRAB domain (Kruppel-associated box)"/>
    <property type="match status" value="1"/>
</dbReference>
<dbReference type="PROSITE" id="PS50805">
    <property type="entry name" value="KRAB"/>
    <property type="match status" value="1"/>
</dbReference>
<dbReference type="PROSITE" id="PS00028">
    <property type="entry name" value="ZINC_FINGER_C2H2_1"/>
    <property type="match status" value="13"/>
</dbReference>
<dbReference type="PROSITE" id="PS50157">
    <property type="entry name" value="ZINC_FINGER_C2H2_2"/>
    <property type="match status" value="13"/>
</dbReference>
<sequence>MRRNSSLSFQMERPLEEQVQSKWSSSQGRTGTGGSDVLQMQNSEHHGQSIKTQTDSISLEDVAVNFTLEEWALLDPGQRNIYRDVMRATFKNLACIGEKWKDQDIEDEHKNQGRNLRSPMVEALCENKEDCPCGKSTSQIPDLNTNLETPTGLKPCDCSVCGEVFMHQVSLNRHMRSHTEQKPNECHEYGEKPHKCKECGKTFTRSSSIRTHERIHTGEKPYECKECGKAFAFLFSFRNHIRIHTGETPYECKECGKAFRYLTALRRHEKNHTGEKPYKCKQCGKAFIYYQPFLTHERTHTGEKPYECKQCGKAFSCPTYLRSHEKTHTGEKPFVCRECGRAFFSHSSLRKHVKTHTGVQPYTCKKCGEAFKSSSSCEVHERTHFGEKPYECKQCGKAFNSSSYLQLHERVHTGEKTYECKECGKAFLYSTHFRIHERTHTREKPYECKQCGRVFIYFSHLRRHERSHTGVKPCECKQCGKAFTCLNSLKVHKRIHTGERPFQCRQCGKAFSYSKSLHVHERTHSRQKP</sequence>